<feature type="chain" id="PRO_0000311128" description="Polymerase acidic protein">
    <location>
        <begin position="1"/>
        <end position="716"/>
    </location>
</feature>
<feature type="short sequence motif" description="Nuclear localization signal 1 (NLS1)" evidence="1 2">
    <location>
        <begin position="124"/>
        <end position="139"/>
    </location>
</feature>
<feature type="short sequence motif" description="Nuclear localization signal 2 (NLS2)" evidence="1 2">
    <location>
        <begin position="184"/>
        <end position="247"/>
    </location>
</feature>
<feature type="binding site" evidence="2">
    <location>
        <position position="41"/>
    </location>
    <ligand>
        <name>Mn(2+)</name>
        <dbReference type="ChEBI" id="CHEBI:29035"/>
        <label>1</label>
    </ligand>
</feature>
<feature type="binding site" evidence="2">
    <location>
        <position position="80"/>
    </location>
    <ligand>
        <name>Mn(2+)</name>
        <dbReference type="ChEBI" id="CHEBI:29035"/>
        <label>2</label>
    </ligand>
</feature>
<feature type="binding site" evidence="2">
    <location>
        <position position="108"/>
    </location>
    <ligand>
        <name>Mn(2+)</name>
        <dbReference type="ChEBI" id="CHEBI:29035"/>
        <label>1</label>
    </ligand>
</feature>
<feature type="binding site" evidence="2">
    <location>
        <position position="108"/>
    </location>
    <ligand>
        <name>Mn(2+)</name>
        <dbReference type="ChEBI" id="CHEBI:29035"/>
        <label>2</label>
    </ligand>
</feature>
<feature type="binding site" evidence="2">
    <location>
        <position position="119"/>
    </location>
    <ligand>
        <name>Mn(2+)</name>
        <dbReference type="ChEBI" id="CHEBI:29035"/>
        <label>1</label>
    </ligand>
</feature>
<feature type="binding site" evidence="2">
    <location>
        <position position="120"/>
    </location>
    <ligand>
        <name>Mn(2+)</name>
        <dbReference type="ChEBI" id="CHEBI:29035"/>
        <label>1</label>
    </ligand>
</feature>
<reference key="1">
    <citation type="journal article" date="2002" name="Virology">
        <title>H5N1 influenza viruses isolated from geese in Southeastern China: evidence for genetic reassortment and interspecies transmission to ducks.</title>
        <authorList>
            <person name="Guan Y."/>
            <person name="Peiris M."/>
            <person name="Kong K.F."/>
            <person name="Dyrting K.C."/>
            <person name="Ellis T.M."/>
            <person name="Sit T."/>
            <person name="Zhang L.J."/>
            <person name="Shortridge K.F."/>
        </authorList>
    </citation>
    <scope>NUCLEOTIDE SEQUENCE [GENOMIC RNA]</scope>
</reference>
<keyword id="KW-1157">Cap snatching</keyword>
<keyword id="KW-0255">Endonuclease</keyword>
<keyword id="KW-1262">Eukaryotic host gene expression shutoff by virus</keyword>
<keyword id="KW-1191">Eukaryotic host transcription shutoff by virus</keyword>
<keyword id="KW-1035">Host cytoplasm</keyword>
<keyword id="KW-1190">Host gene expression shutoff by virus</keyword>
<keyword id="KW-1048">Host nucleus</keyword>
<keyword id="KW-0945">Host-virus interaction</keyword>
<keyword id="KW-0378">Hydrolase</keyword>
<keyword id="KW-1104">Inhibition of host RNA polymerase II by virus</keyword>
<keyword id="KW-0464">Manganese</keyword>
<keyword id="KW-0479">Metal-binding</keyword>
<keyword id="KW-0540">Nuclease</keyword>
<keyword id="KW-0597">Phosphoprotein</keyword>
<keyword id="KW-0688">Ribosomal frameshifting</keyword>
<proteinExistence type="inferred from homology"/>
<dbReference type="EC" id="3.1.-.-" evidence="2"/>
<dbReference type="EMBL" id="AY059532">
    <property type="protein sequence ID" value="AAL31438.1"/>
    <property type="molecule type" value="Genomic_RNA"/>
</dbReference>
<dbReference type="SMR" id="Q8QPG0"/>
<dbReference type="IntAct" id="Q8QPG0">
    <property type="interactions" value="2"/>
</dbReference>
<dbReference type="MINT" id="Q8QPG0"/>
<dbReference type="MEROPS" id="S62.001"/>
<dbReference type="Proteomes" id="UP000008285">
    <property type="component" value="Genome"/>
</dbReference>
<dbReference type="GO" id="GO:0030430">
    <property type="term" value="C:host cell cytoplasm"/>
    <property type="evidence" value="ECO:0007669"/>
    <property type="project" value="UniProtKB-SubCell"/>
</dbReference>
<dbReference type="GO" id="GO:0042025">
    <property type="term" value="C:host cell nucleus"/>
    <property type="evidence" value="ECO:0007669"/>
    <property type="project" value="UniProtKB-SubCell"/>
</dbReference>
<dbReference type="GO" id="GO:0004519">
    <property type="term" value="F:endonuclease activity"/>
    <property type="evidence" value="ECO:0007669"/>
    <property type="project" value="UniProtKB-KW"/>
</dbReference>
<dbReference type="GO" id="GO:0046872">
    <property type="term" value="F:metal ion binding"/>
    <property type="evidence" value="ECO:0007669"/>
    <property type="project" value="UniProtKB-KW"/>
</dbReference>
<dbReference type="GO" id="GO:0003723">
    <property type="term" value="F:RNA binding"/>
    <property type="evidence" value="ECO:0007669"/>
    <property type="project" value="UniProtKB-UniRule"/>
</dbReference>
<dbReference type="GO" id="GO:0075526">
    <property type="term" value="P:cap snatching"/>
    <property type="evidence" value="ECO:0007669"/>
    <property type="project" value="UniProtKB-UniRule"/>
</dbReference>
<dbReference type="GO" id="GO:0006351">
    <property type="term" value="P:DNA-templated transcription"/>
    <property type="evidence" value="ECO:0007669"/>
    <property type="project" value="UniProtKB-UniRule"/>
</dbReference>
<dbReference type="GO" id="GO:0039657">
    <property type="term" value="P:symbiont-mediated suppression of host gene expression"/>
    <property type="evidence" value="ECO:0007669"/>
    <property type="project" value="UniProtKB-KW"/>
</dbReference>
<dbReference type="GO" id="GO:0039523">
    <property type="term" value="P:symbiont-mediated suppression of host mRNA transcription via inhibition of RNA polymerase II activity"/>
    <property type="evidence" value="ECO:0007669"/>
    <property type="project" value="UniProtKB-UniRule"/>
</dbReference>
<dbReference type="GO" id="GO:0039694">
    <property type="term" value="P:viral RNA genome replication"/>
    <property type="evidence" value="ECO:0007669"/>
    <property type="project" value="InterPro"/>
</dbReference>
<dbReference type="GO" id="GO:0075523">
    <property type="term" value="P:viral translational frameshifting"/>
    <property type="evidence" value="ECO:0007669"/>
    <property type="project" value="UniProtKB-KW"/>
</dbReference>
<dbReference type="FunFam" id="3.40.91.90:FF:000001">
    <property type="entry name" value="Polymerase acidic protein"/>
    <property type="match status" value="1"/>
</dbReference>
<dbReference type="Gene3D" id="3.40.91.90">
    <property type="entry name" value="Influenza RNA-dependent RNA polymerase subunit PA, endonuclease domain"/>
    <property type="match status" value="1"/>
</dbReference>
<dbReference type="HAMAP" id="MF_04063">
    <property type="entry name" value="INFV_PA"/>
    <property type="match status" value="1"/>
</dbReference>
<dbReference type="InterPro" id="IPR037534">
    <property type="entry name" value="INFV_PA"/>
</dbReference>
<dbReference type="InterPro" id="IPR001009">
    <property type="entry name" value="PA/PA-X"/>
</dbReference>
<dbReference type="InterPro" id="IPR038372">
    <property type="entry name" value="PA/PA-X_sf"/>
</dbReference>
<dbReference type="Pfam" id="PF00603">
    <property type="entry name" value="Flu_PA"/>
    <property type="match status" value="1"/>
</dbReference>
<organismHost>
    <name type="scientific">Aves</name>
    <dbReference type="NCBI Taxonomy" id="8782"/>
</organismHost>
<organismHost>
    <name type="scientific">Felis catus</name>
    <name type="common">Cat</name>
    <name type="synonym">Felis silvestris catus</name>
    <dbReference type="NCBI Taxonomy" id="9685"/>
</organismHost>
<organismHost>
    <name type="scientific">Homo sapiens</name>
    <name type="common">Human</name>
    <dbReference type="NCBI Taxonomy" id="9606"/>
</organismHost>
<organismHost>
    <name type="scientific">Panthera pardus</name>
    <name type="common">Leopard</name>
    <name type="synonym">Felis pardus</name>
    <dbReference type="NCBI Taxonomy" id="9691"/>
</organismHost>
<organismHost>
    <name type="scientific">Panthera tigris</name>
    <name type="common">Tiger</name>
    <dbReference type="NCBI Taxonomy" id="9694"/>
</organismHost>
<organismHost>
    <name type="scientific">Sus scrofa</name>
    <name type="common">Pig</name>
    <dbReference type="NCBI Taxonomy" id="9823"/>
</organismHost>
<organism>
    <name type="scientific">Influenza A virus (strain A/Duck/Hong Kong/2986.1/2000 H5N1 genotype C)</name>
    <dbReference type="NCBI Taxonomy" id="176674"/>
    <lineage>
        <taxon>Viruses</taxon>
        <taxon>Riboviria</taxon>
        <taxon>Orthornavirae</taxon>
        <taxon>Negarnaviricota</taxon>
        <taxon>Polyploviricotina</taxon>
        <taxon>Insthoviricetes</taxon>
        <taxon>Articulavirales</taxon>
        <taxon>Orthomyxoviridae</taxon>
        <taxon>Alphainfluenzavirus</taxon>
        <taxon>Alphainfluenzavirus influenzae</taxon>
        <taxon>Influenza A virus</taxon>
    </lineage>
</organism>
<accession>Q8QPG0</accession>
<comment type="function">
    <text evidence="2">Plays an essential role in viral RNA transcription and replication by forming the heterotrimeric polymerase complex together with PB1 and PB2 subunits. The complex transcribes viral mRNAs by using a unique mechanism called cap-snatching. It consists in the hijacking and cleavage of host capped pre-mRNAs. These short capped RNAs are then used as primers for viral mRNAs. The PB2 subunit is responsible for the binding of the 5' cap of cellular pre-mRNAs which are subsequently cleaved after 10-13 nucleotides by the PA subunit that carries the endonuclease activity.</text>
</comment>
<comment type="cofactor">
    <cofactor evidence="2">
        <name>Mn(2+)</name>
        <dbReference type="ChEBI" id="CHEBI:29035"/>
    </cofactor>
    <text evidence="2">Binds 2 manganese ions per subunit.</text>
</comment>
<comment type="subunit">
    <text evidence="1 2">Influenza RNA polymerase is composed of three subunits: PB1, PB2 and PA. Interacts (via C-terminus) with PB1 (via N-terminus).</text>
</comment>
<comment type="subcellular location">
    <subcellularLocation>
        <location evidence="2">Host cytoplasm</location>
    </subcellularLocation>
    <subcellularLocation>
        <location evidence="2">Host nucleus</location>
    </subcellularLocation>
    <text evidence="1 2">PB1 and PA are transported in the host nucleus as a complex.</text>
</comment>
<comment type="alternative products">
    <event type="ribosomal frameshifting"/>
    <isoform>
        <id>Q8QPG0-1</id>
        <name>PA</name>
        <sequence type="displayed"/>
    </isoform>
    <isoform>
        <id>P0CK84-1</id>
        <name>PA-X</name>
        <sequence type="external"/>
    </isoform>
</comment>
<comment type="PTM">
    <text evidence="1 2">Phosphorylated on serines and threonines by host kinases, including human casein kinase II.</text>
</comment>
<comment type="similarity">
    <text evidence="2">Belongs to the influenza viruses PA family.</text>
</comment>
<evidence type="ECO:0000250" key="1">
    <source>
        <dbReference type="UniProtKB" id="P03433"/>
    </source>
</evidence>
<evidence type="ECO:0000255" key="2">
    <source>
        <dbReference type="HAMAP-Rule" id="MF_04063"/>
    </source>
</evidence>
<protein>
    <recommendedName>
        <fullName evidence="2">Polymerase acidic protein</fullName>
        <ecNumber evidence="2">3.1.-.-</ecNumber>
    </recommendedName>
    <alternativeName>
        <fullName evidence="2">RNA-directed RNA polymerase subunit P2</fullName>
    </alternativeName>
</protein>
<name>PA_I00A0</name>
<sequence>MEDFVRQCFNPMIVELAEKAMKEYGEDPKIETNKFAAICTHLEVCFMYSDFHFIDERSESIIVESGDPNALLKHRFEIIEGRDRTMAWTVVNSICNTTGVEKPKFLPDLYDYKENRFIEIGVTRREVHIYYLEKANKIKSEKTHIHIFSFTGEEMATKADYTLDEESRARIKTRLFTIRQEMASRGLWDSFRQSERGEETIEERFEITGTMRRLADQSLPPNFSSLENFRAYVDGFEPNGCIEGKLSQMSKEVNARIEPFLKTTPRPLRLPDGPPCSQRSKFLLMDALKLNIEDPSHEGEGIPLYDAIKCMKTFFGWKEPNIVKPHEKGINPNYLLAWKQVLAELQDIENEEKIPKTKNMKKTGQLKWALGENMAPEKVDFEDCKDVSDLRQYDSDEPESRSLASWIQSEFNKACELTDSSWIELDEIGEDVAPIEHIASMRRNYFTAEVSHCRATEYIMKGVYINTALLNASCAAMDDFQLIPMISKCRTKEGRRKTNLYGFIIKGRSHLRNDTDVVNFVSMEFSLTDPRLEPHKWEKYCVLEIGDMLLRTAVGQVSRPMFLYVRTNGTSKIKMKWGMEMRRCLLQSLQQIESMIEAESSVKEKDMTKEFFENKSETWPIGESPKGVEEGSIGKVCRTLLAKSVFNSLYASPQLEGFSAESRKLLLIAQALRDNLEPGTFDLGGLYEAIEECLINDPWVLLNASWFNSFLTHALK</sequence>
<gene>
    <name evidence="2" type="primary">PA</name>
</gene>